<comment type="function">
    <text evidence="2 3">Protects dopaminergic neurons against oxidative stress-induced neurodegeneration (PubMed:25474638, PubMed:29346364). May act partly via dopamine receptor dop-2 to negatively regulate dopamine reuptake transporter dat-1 activity (PubMed:25474638). Also plays a role in modulating behaviors linked to dopamine signaling (PubMed:25474638). Confers protection against oxidative stress in the whole body (PubMed:29346364).</text>
</comment>
<comment type="subcellular location">
    <subcellularLocation>
        <location evidence="6">Cell membrane</location>
        <topology evidence="5">Multi-pass membrane protein</topology>
    </subcellularLocation>
    <subcellularLocation>
        <location evidence="6">Cell projection</location>
        <location evidence="6">Dendrite</location>
    </subcellularLocation>
    <subcellularLocation>
        <location evidence="6">Cell projection</location>
        <location evidence="6">Axon</location>
    </subcellularLocation>
    <text evidence="6">May localize near the nucleus or ER.</text>
</comment>
<comment type="alternative products">
    <event type="alternative splicing"/>
    <isoform>
        <id>Q11098-1</id>
        <name evidence="7">b</name>
        <name evidence="4">Long</name>
        <sequence type="displayed"/>
    </isoform>
    <isoform>
        <id>Q11098-2</id>
        <name evidence="7">a</name>
        <sequence type="described" ref="VSP_060366"/>
    </isoform>
    <isoform>
        <id>Q11098-3</id>
        <name evidence="9">c</name>
        <sequence type="described" ref="VSP_060367"/>
    </isoform>
    <isoform>
        <id>Q11098-4</id>
        <name evidence="10">d</name>
        <sequence type="described" ref="VSP_060365 VSP_060367"/>
    </isoform>
    <isoform>
        <id>Q11098-5</id>
        <name evidence="11">e</name>
        <sequence type="described" ref="VSP_060365"/>
    </isoform>
</comment>
<comment type="tissue specificity">
    <text evidence="2">Expressed in dopaminergic neurons, head muscles, vulva and spermatheca.</text>
</comment>
<comment type="developmental stage">
    <text evidence="2">In larvae, expressed in the NSM serotonergic neuron and in muscles.</text>
</comment>
<comment type="similarity">
    <text evidence="5">Belongs to the tetraspanin (TM4SF) family.</text>
</comment>
<feature type="chain" id="PRO_0000219294" description="Tetraspanin-17">
    <location>
        <begin position="1"/>
        <end position="312"/>
    </location>
</feature>
<feature type="transmembrane region" description="Helical" evidence="1">
    <location>
        <begin position="17"/>
        <end position="37"/>
    </location>
</feature>
<feature type="transmembrane region" description="Helical" evidence="1">
    <location>
        <begin position="64"/>
        <end position="84"/>
    </location>
</feature>
<feature type="transmembrane region" description="Helical" evidence="1">
    <location>
        <begin position="89"/>
        <end position="109"/>
    </location>
</feature>
<feature type="transmembrane region" description="Helical" evidence="1">
    <location>
        <begin position="274"/>
        <end position="294"/>
    </location>
</feature>
<feature type="splice variant" id="VSP_060365" description="In isoform d and isoform e." evidence="5">
    <location>
        <begin position="1"/>
        <end position="123"/>
    </location>
</feature>
<feature type="splice variant" id="VSP_060366" description="In isoform a." evidence="5">
    <location>
        <begin position="119"/>
        <end position="152"/>
    </location>
</feature>
<feature type="splice variant" id="VSP_060367" description="In isoform c and isoform d." evidence="5">
    <original>QFYVYSVKENVREIVKSKYGVMTSEPENKMVTEFIDKLQFYEKCCGSLGPTDYISSRWSQSTNQDSEEIESPLFPVSCCTQITGASALNPLAKSYARCQQIGANRQWRHA</original>
    <variation>QFYHQCCGGEGPLDYKDSFWYITNTLRGTRSFVPPSCCKQAQVGRAWAPVPIDPMCTTYRYLTTAFDTSVNT</variation>
    <location>
        <begin position="150"/>
        <end position="259"/>
    </location>
</feature>
<feature type="mutagenesis site" description="In gt1681; in larvae, enhances neurodegeneration of dopaminergic neurons induced by the oxidative stress agent 6-hydroxydopamine (6-OHDA). Hypersensitivity to 6-OHDA is abolished in a dat-1 (ok157) mutant background and partially reduced in a dop-2 or dop-3 mutant background. Reduces dopamine reuptake by transporter dat-1. Loss of cell membrane localization." evidence="2">
    <original>G</original>
    <variation>E</variation>
    <location>
        <position position="109"/>
    </location>
</feature>
<feature type="mutagenesis site" description="In vc2026; enhances neurodegeneration of dopaminergic neurons induced by the oxidative stress agent 6-hydroxydopamine (6-OHDA)." evidence="2">
    <original>G</original>
    <variation>R</variation>
    <location>
        <position position="109"/>
    </location>
</feature>
<evidence type="ECO:0000255" key="1"/>
<evidence type="ECO:0000269" key="2">
    <source>
    </source>
</evidence>
<evidence type="ECO:0000269" key="3">
    <source>
    </source>
</evidence>
<evidence type="ECO:0000303" key="4">
    <source>
    </source>
</evidence>
<evidence type="ECO:0000305" key="5"/>
<evidence type="ECO:0000305" key="6">
    <source>
    </source>
</evidence>
<evidence type="ECO:0000312" key="7">
    <source>
        <dbReference type="WormBase" id="C02F12.1a"/>
    </source>
</evidence>
<evidence type="ECO:0000312" key="8">
    <source>
        <dbReference type="WormBase" id="C02F12.1b"/>
    </source>
</evidence>
<evidence type="ECO:0000312" key="9">
    <source>
        <dbReference type="WormBase" id="C02F12.1c"/>
    </source>
</evidence>
<evidence type="ECO:0000312" key="10">
    <source>
        <dbReference type="WormBase" id="C02F12.1d"/>
    </source>
</evidence>
<evidence type="ECO:0000312" key="11">
    <source>
        <dbReference type="WormBase" id="C02F12.1e"/>
    </source>
</evidence>
<protein>
    <recommendedName>
        <fullName evidence="4">Tetraspanin-17</fullName>
    </recommendedName>
</protein>
<gene>
    <name evidence="4 8" type="primary">tsp-17</name>
    <name evidence="8" type="ORF">C02F12.1</name>
</gene>
<sequence length="312" mass="35478">MATERDGGGCLRVAVSIFSIYYWLSALGHVFLGLWMLLDPKRNYILDLVHFSENDPLLKASAYVSLVCGCAQLLVGFLGLCGAVNRSRFLLLAFVMFLIGTFLADVAMGTLSLFYKDKFSNNYMGVYLKNLTYNRYSRDRWVLPLMDTIQFYVYSVKENVREIVKSKYGVMTSEPENKMVTEFIDKLQFYEKCCGSLGPTDYISSRWSQSTNQDSEEIESPLFPVSCCTQITGASALNPLAKSYARCQQIGANRQWRHAVGCSERLMSWFNEQIWIFVGFGFGSALTMMLGICLSCCLISKIRIYHVIRDDY</sequence>
<keyword id="KW-0025">Alternative splicing</keyword>
<keyword id="KW-1003">Cell membrane</keyword>
<keyword id="KW-0966">Cell projection</keyword>
<keyword id="KW-0472">Membrane</keyword>
<keyword id="KW-1185">Reference proteome</keyword>
<keyword id="KW-0812">Transmembrane</keyword>
<keyword id="KW-1133">Transmembrane helix</keyword>
<dbReference type="EMBL" id="BX284606">
    <property type="protein sequence ID" value="CCD62373.1"/>
    <property type="molecule type" value="Genomic_DNA"/>
</dbReference>
<dbReference type="EMBL" id="BX284606">
    <property type="protein sequence ID" value="CCD62379.1"/>
    <property type="molecule type" value="Genomic_DNA"/>
</dbReference>
<dbReference type="EMBL" id="BX284606">
    <property type="protein sequence ID" value="CTQ87024.1"/>
    <property type="molecule type" value="Genomic_DNA"/>
</dbReference>
<dbReference type="EMBL" id="BX284606">
    <property type="protein sequence ID" value="CTQ87025.1"/>
    <property type="molecule type" value="Genomic_DNA"/>
</dbReference>
<dbReference type="EMBL" id="BX284606">
    <property type="protein sequence ID" value="CTQ87026.1"/>
    <property type="molecule type" value="Genomic_DNA"/>
</dbReference>
<dbReference type="RefSeq" id="NP_001129920.2">
    <molecule id="Q11098-1"/>
    <property type="nucleotide sequence ID" value="NM_001136448.4"/>
</dbReference>
<dbReference type="RefSeq" id="NP_001300313.1">
    <molecule id="Q11098-3"/>
    <property type="nucleotide sequence ID" value="NM_001313384.4"/>
</dbReference>
<dbReference type="RefSeq" id="NP_001300314.1">
    <molecule id="Q11098-4"/>
    <property type="nucleotide sequence ID" value="NM_001313385.3"/>
</dbReference>
<dbReference type="RefSeq" id="NP_001300315.1">
    <molecule id="Q11098-5"/>
    <property type="nucleotide sequence ID" value="NM_001313386.3"/>
</dbReference>
<dbReference type="RefSeq" id="NP_001370351.1">
    <molecule id="Q11098-2"/>
    <property type="nucleotide sequence ID" value="NM_001383547.2"/>
</dbReference>
<dbReference type="RefSeq" id="NP_508634.3">
    <property type="nucleotide sequence ID" value="NM_076233.3"/>
</dbReference>
<dbReference type="SMR" id="Q11098"/>
<dbReference type="BioGRID" id="56559">
    <property type="interactions" value="1"/>
</dbReference>
<dbReference type="FunCoup" id="Q11098">
    <property type="interactions" value="1"/>
</dbReference>
<dbReference type="STRING" id="6239.C02F12.1b.1"/>
<dbReference type="PaxDb" id="6239-C02F12.1b"/>
<dbReference type="EnsemblMetazoa" id="C02F12.1a.1">
    <molecule id="Q11098-2"/>
    <property type="protein sequence ID" value="C02F12.1a.1"/>
    <property type="gene ID" value="WBGene00006643"/>
</dbReference>
<dbReference type="EnsemblMetazoa" id="C02F12.1b.1">
    <molecule id="Q11098-1"/>
    <property type="protein sequence ID" value="C02F12.1b.1"/>
    <property type="gene ID" value="WBGene00006643"/>
</dbReference>
<dbReference type="EnsemblMetazoa" id="C02F12.1c.1">
    <molecule id="Q11098-3"/>
    <property type="protein sequence ID" value="C02F12.1c.1"/>
    <property type="gene ID" value="WBGene00006643"/>
</dbReference>
<dbReference type="EnsemblMetazoa" id="C02F12.1d.1">
    <molecule id="Q11098-4"/>
    <property type="protein sequence ID" value="C02F12.1d.1"/>
    <property type="gene ID" value="WBGene00006643"/>
</dbReference>
<dbReference type="EnsemblMetazoa" id="C02F12.1e.1">
    <molecule id="Q11098-5"/>
    <property type="protein sequence ID" value="C02F12.1e.1"/>
    <property type="gene ID" value="WBGene00006643"/>
</dbReference>
<dbReference type="GeneID" id="192067"/>
<dbReference type="KEGG" id="cel:CELE_C02F12.1"/>
<dbReference type="UCSC" id="C02F12.1">
    <molecule id="Q11098-1"/>
    <property type="organism name" value="c. elegans"/>
</dbReference>
<dbReference type="AGR" id="WB:WBGene00006643"/>
<dbReference type="CTD" id="192067"/>
<dbReference type="WormBase" id="C02F12.1a">
    <molecule id="Q11098-2"/>
    <property type="protein sequence ID" value="CE50471"/>
    <property type="gene ID" value="WBGene00006643"/>
    <property type="gene designation" value="tsp-17"/>
</dbReference>
<dbReference type="WormBase" id="C02F12.1b">
    <molecule id="Q11098-1"/>
    <property type="protein sequence ID" value="CE45957"/>
    <property type="gene ID" value="WBGene00006643"/>
    <property type="gene designation" value="tsp-17"/>
</dbReference>
<dbReference type="WormBase" id="C02F12.1c">
    <molecule id="Q11098-3"/>
    <property type="protein sequence ID" value="CE50481"/>
    <property type="gene ID" value="WBGene00006643"/>
    <property type="gene designation" value="tsp-17"/>
</dbReference>
<dbReference type="WormBase" id="C02F12.1d">
    <molecule id="Q11098-4"/>
    <property type="protein sequence ID" value="CE50466"/>
    <property type="gene ID" value="WBGene00006643"/>
    <property type="gene designation" value="tsp-17"/>
</dbReference>
<dbReference type="WormBase" id="C02F12.1e">
    <molecule id="Q11098-5"/>
    <property type="protein sequence ID" value="CE50399"/>
    <property type="gene ID" value="WBGene00006643"/>
    <property type="gene designation" value="tsp-17"/>
</dbReference>
<dbReference type="eggNOG" id="KOG3882">
    <property type="taxonomic scope" value="Eukaryota"/>
</dbReference>
<dbReference type="GeneTree" id="ENSGT00940000173612"/>
<dbReference type="HOGENOM" id="CLU_055524_4_2_1"/>
<dbReference type="InParanoid" id="Q11098"/>
<dbReference type="OMA" id="YITNTLR"/>
<dbReference type="OrthoDB" id="10033535at2759"/>
<dbReference type="PhylomeDB" id="Q11098"/>
<dbReference type="PRO" id="PR:Q11098"/>
<dbReference type="Proteomes" id="UP000001940">
    <property type="component" value="Chromosome X"/>
</dbReference>
<dbReference type="Bgee" id="WBGene00006643">
    <property type="expression patterns" value="Expressed in pharyngeal muscle cell (C elegans) and 3 other cell types or tissues"/>
</dbReference>
<dbReference type="GO" id="GO:0030424">
    <property type="term" value="C:axon"/>
    <property type="evidence" value="ECO:0000314"/>
    <property type="project" value="WormBase"/>
</dbReference>
<dbReference type="GO" id="GO:0030425">
    <property type="term" value="C:dendrite"/>
    <property type="evidence" value="ECO:0000314"/>
    <property type="project" value="WormBase"/>
</dbReference>
<dbReference type="GO" id="GO:0048471">
    <property type="term" value="C:perinuclear region of cytoplasm"/>
    <property type="evidence" value="ECO:0000314"/>
    <property type="project" value="WormBase"/>
</dbReference>
<dbReference type="GO" id="GO:0005886">
    <property type="term" value="C:plasma membrane"/>
    <property type="evidence" value="ECO:0000314"/>
    <property type="project" value="WormBase"/>
</dbReference>
<dbReference type="GO" id="GO:0031749">
    <property type="term" value="F:D2 dopamine receptor binding"/>
    <property type="evidence" value="ECO:0000353"/>
    <property type="project" value="WormBase"/>
</dbReference>
<dbReference type="GO" id="GO:0072756">
    <property type="term" value="P:cellular response to paraquat"/>
    <property type="evidence" value="ECO:0000315"/>
    <property type="project" value="UniProtKB"/>
</dbReference>
<dbReference type="GO" id="GO:1902883">
    <property type="term" value="P:negative regulation of response to oxidative stress"/>
    <property type="evidence" value="ECO:0000315"/>
    <property type="project" value="UniProtKB"/>
</dbReference>
<dbReference type="GO" id="GO:0051584">
    <property type="term" value="P:regulation of dopamine uptake involved in synaptic transmission"/>
    <property type="evidence" value="ECO:0000315"/>
    <property type="project" value="UniProtKB"/>
</dbReference>
<dbReference type="CDD" id="cd03160">
    <property type="entry name" value="CD37_CD82_like_LEL"/>
    <property type="match status" value="1"/>
</dbReference>
<dbReference type="FunFam" id="1.10.1450.10:FF:000069">
    <property type="entry name" value="Tetraspanin"/>
    <property type="match status" value="1"/>
</dbReference>
<dbReference type="Gene3D" id="1.10.1450.10">
    <property type="entry name" value="Tetraspanin"/>
    <property type="match status" value="1"/>
</dbReference>
<dbReference type="InterPro" id="IPR018499">
    <property type="entry name" value="Tetraspanin/Peripherin"/>
</dbReference>
<dbReference type="InterPro" id="IPR000301">
    <property type="entry name" value="Tetraspanin_animals"/>
</dbReference>
<dbReference type="InterPro" id="IPR018503">
    <property type="entry name" value="Tetraspanin_CS"/>
</dbReference>
<dbReference type="InterPro" id="IPR008952">
    <property type="entry name" value="Tetraspanin_EC2_sf"/>
</dbReference>
<dbReference type="PANTHER" id="PTHR19282">
    <property type="entry name" value="TETRASPANIN"/>
    <property type="match status" value="1"/>
</dbReference>
<dbReference type="PANTHER" id="PTHR19282:SF555">
    <property type="entry name" value="TETRASPANIN-2A"/>
    <property type="match status" value="1"/>
</dbReference>
<dbReference type="Pfam" id="PF00335">
    <property type="entry name" value="Tetraspanin"/>
    <property type="match status" value="1"/>
</dbReference>
<dbReference type="PIRSF" id="PIRSF002419">
    <property type="entry name" value="Tetraspanin"/>
    <property type="match status" value="1"/>
</dbReference>
<dbReference type="PRINTS" id="PR00259">
    <property type="entry name" value="TMFOUR"/>
</dbReference>
<dbReference type="SUPFAM" id="SSF48652">
    <property type="entry name" value="Tetraspanin"/>
    <property type="match status" value="1"/>
</dbReference>
<dbReference type="PROSITE" id="PS00421">
    <property type="entry name" value="TM4_1"/>
    <property type="match status" value="1"/>
</dbReference>
<proteinExistence type="evidence at protein level"/>
<accession>Q11098</accession>
<accession>A0A0K3AT70</accession>
<accession>A0A0K3AW84</accession>
<accession>A0A0K3AYG5</accession>
<accession>B3WFU6</accession>
<reference key="1">
    <citation type="journal article" date="1998" name="Science">
        <title>Genome sequence of the nematode C. elegans: a platform for investigating biology.</title>
        <authorList>
            <consortium name="The C. elegans sequencing consortium"/>
        </authorList>
    </citation>
    <scope>NUCLEOTIDE SEQUENCE [LARGE SCALE GENOMIC DNA]</scope>
    <source>
        <strain>Bristol N2</strain>
    </source>
</reference>
<reference key="2">
    <citation type="journal article" date="2014" name="PLoS Genet.">
        <title>Tetraspanin (TSP-17) protects dopaminergic neurons against 6-OHDA-induced neurodegeneration in C. elegans.</title>
        <authorList>
            <person name="Masoudi N."/>
            <person name="Ibanez-Cruceyra P."/>
            <person name="Offenburger S.L."/>
            <person name="Holmes A."/>
            <person name="Gartner A."/>
        </authorList>
    </citation>
    <scope>FUNCTION</scope>
    <scope>SUBCELLULAR LOCATION</scope>
    <scope>TISSUE SPECIFICITY</scope>
    <scope>DEVELOPMENTAL STAGE</scope>
    <scope>MUTAGENESIS OF GLY-109</scope>
</reference>
<reference key="3">
    <citation type="journal article" date="2018" name="PLoS Genet.">
        <title>Mutations in Caenorhabditis elegans neuroligin-like glit-1, the apoptosis pathway and the calcium chaperone crt-1 increase dopaminergic neurodegeneration after 6-OHDA treatment.</title>
        <authorList>
            <person name="Offenburger S.L."/>
            <person name="Jongsma E."/>
            <person name="Gartner A."/>
        </authorList>
    </citation>
    <scope>FUNCTION</scope>
</reference>
<organism>
    <name type="scientific">Caenorhabditis elegans</name>
    <dbReference type="NCBI Taxonomy" id="6239"/>
    <lineage>
        <taxon>Eukaryota</taxon>
        <taxon>Metazoa</taxon>
        <taxon>Ecdysozoa</taxon>
        <taxon>Nematoda</taxon>
        <taxon>Chromadorea</taxon>
        <taxon>Rhabditida</taxon>
        <taxon>Rhabditina</taxon>
        <taxon>Rhabditomorpha</taxon>
        <taxon>Rhabditoidea</taxon>
        <taxon>Rhabditidae</taxon>
        <taxon>Peloderinae</taxon>
        <taxon>Caenorhabditis</taxon>
    </lineage>
</organism>
<name>TSP17_CAEEL</name>